<organism evidence="10">
    <name type="scientific">Drosophila melanogaster</name>
    <name type="common">Fruit fly</name>
    <dbReference type="NCBI Taxonomy" id="7227"/>
    <lineage>
        <taxon>Eukaryota</taxon>
        <taxon>Metazoa</taxon>
        <taxon>Ecdysozoa</taxon>
        <taxon>Arthropoda</taxon>
        <taxon>Hexapoda</taxon>
        <taxon>Insecta</taxon>
        <taxon>Pterygota</taxon>
        <taxon>Neoptera</taxon>
        <taxon>Endopterygota</taxon>
        <taxon>Diptera</taxon>
        <taxon>Brachycera</taxon>
        <taxon>Muscomorpha</taxon>
        <taxon>Ephydroidea</taxon>
        <taxon>Drosophilidae</taxon>
        <taxon>Drosophila</taxon>
        <taxon>Sophophora</taxon>
    </lineage>
</organism>
<gene>
    <name evidence="9" type="primary">Sf3b3</name>
    <name evidence="9" type="ORF">CG13900</name>
</gene>
<dbReference type="EMBL" id="AE014296">
    <property type="protein sequence ID" value="AAF47416.2"/>
    <property type="molecule type" value="Genomic_DNA"/>
</dbReference>
<dbReference type="EMBL" id="AE014296">
    <property type="protein sequence ID" value="AGB93918.1"/>
    <property type="molecule type" value="Genomic_DNA"/>
</dbReference>
<dbReference type="EMBL" id="BT021338">
    <property type="protein sequence ID" value="AAX33486.1"/>
    <property type="molecule type" value="mRNA"/>
</dbReference>
<dbReference type="EMBL" id="BT021424">
    <property type="protein sequence ID" value="AAX33572.1"/>
    <property type="molecule type" value="mRNA"/>
</dbReference>
<dbReference type="EMBL" id="BT120391">
    <property type="protein sequence ID" value="ADD20765.1"/>
    <property type="molecule type" value="mRNA"/>
</dbReference>
<dbReference type="RefSeq" id="NP_001261223.1">
    <molecule id="Q9W0M7-2"/>
    <property type="nucleotide sequence ID" value="NM_001274294.2"/>
</dbReference>
<dbReference type="RefSeq" id="NP_728546.1">
    <molecule id="Q9W0M7-1"/>
    <property type="nucleotide sequence ID" value="NM_167842.3"/>
</dbReference>
<dbReference type="SMR" id="Q9W0M7"/>
<dbReference type="ComplexPortal" id="CPX-2644">
    <property type="entry name" value="SAGA complex"/>
</dbReference>
<dbReference type="FunCoup" id="Q9W0M7">
    <property type="interactions" value="2767"/>
</dbReference>
<dbReference type="IntAct" id="Q9W0M7">
    <property type="interactions" value="36"/>
</dbReference>
<dbReference type="STRING" id="7227.FBpp0072494"/>
<dbReference type="PaxDb" id="7227-FBpp0072494"/>
<dbReference type="DNASU" id="38093"/>
<dbReference type="EnsemblMetazoa" id="FBtr0072597">
    <molecule id="Q9W0M7-1"/>
    <property type="protein sequence ID" value="FBpp0072494"/>
    <property type="gene ID" value="FBgn0035162"/>
</dbReference>
<dbReference type="EnsemblMetazoa" id="FBtr0331404">
    <molecule id="Q9W0M7-2"/>
    <property type="protein sequence ID" value="FBpp0303821"/>
    <property type="gene ID" value="FBgn0035162"/>
</dbReference>
<dbReference type="GeneID" id="38093"/>
<dbReference type="KEGG" id="dme:Dmel_CG13900"/>
<dbReference type="UCSC" id="CG13900-RA">
    <molecule id="Q9W0M7-1"/>
    <property type="organism name" value="d. melanogaster"/>
</dbReference>
<dbReference type="AGR" id="FB:FBgn0035162"/>
<dbReference type="CTD" id="23450"/>
<dbReference type="FlyBase" id="FBgn0035162">
    <property type="gene designation" value="Sf3b3"/>
</dbReference>
<dbReference type="VEuPathDB" id="VectorBase:FBgn0035162"/>
<dbReference type="eggNOG" id="KOG1898">
    <property type="taxonomic scope" value="Eukaryota"/>
</dbReference>
<dbReference type="GeneTree" id="ENSGT00950000183151"/>
<dbReference type="HOGENOM" id="CLU_043331_0_0_1"/>
<dbReference type="InParanoid" id="Q9W0M7"/>
<dbReference type="OMA" id="PRATGHW"/>
<dbReference type="OrthoDB" id="436637at2759"/>
<dbReference type="PhylomeDB" id="Q9W0M7"/>
<dbReference type="Reactome" id="R-DME-72165">
    <property type="pathway name" value="mRNA Splicing - Minor Pathway"/>
</dbReference>
<dbReference type="SignaLink" id="Q9W0M7"/>
<dbReference type="BioGRID-ORCS" id="38093">
    <property type="hits" value="0 hits in 1 CRISPR screen"/>
</dbReference>
<dbReference type="GenomeRNAi" id="38093"/>
<dbReference type="PRO" id="PR:Q9W0M7"/>
<dbReference type="Proteomes" id="UP000000803">
    <property type="component" value="Chromosome 3L"/>
</dbReference>
<dbReference type="Bgee" id="FBgn0035162">
    <property type="expression patterns" value="Expressed in posterior terminal follicle cell in ovary and 85 other cell types or tissues"/>
</dbReference>
<dbReference type="ExpressionAtlas" id="Q9W0M7">
    <property type="expression patterns" value="baseline and differential"/>
</dbReference>
<dbReference type="GO" id="GO:0071013">
    <property type="term" value="C:catalytic step 2 spliceosome"/>
    <property type="evidence" value="ECO:0007005"/>
    <property type="project" value="FlyBase"/>
</dbReference>
<dbReference type="GO" id="GO:0005634">
    <property type="term" value="C:nucleus"/>
    <property type="evidence" value="ECO:0000318"/>
    <property type="project" value="GO_Central"/>
</dbReference>
<dbReference type="GO" id="GO:0071011">
    <property type="term" value="C:precatalytic spliceosome"/>
    <property type="evidence" value="ECO:0007005"/>
    <property type="project" value="FlyBase"/>
</dbReference>
<dbReference type="GO" id="GO:0000124">
    <property type="term" value="C:SAGA complex"/>
    <property type="evidence" value="ECO:0000314"/>
    <property type="project" value="UniProtKB"/>
</dbReference>
<dbReference type="GO" id="GO:0030532">
    <property type="term" value="C:small nuclear ribonucleoprotein complex"/>
    <property type="evidence" value="ECO:0000250"/>
    <property type="project" value="FlyBase"/>
</dbReference>
<dbReference type="GO" id="GO:0005686">
    <property type="term" value="C:U2 snRNP"/>
    <property type="evidence" value="ECO:0000314"/>
    <property type="project" value="UniProtKB"/>
</dbReference>
<dbReference type="GO" id="GO:0030620">
    <property type="term" value="F:U2 snRNA binding"/>
    <property type="evidence" value="ECO:0000318"/>
    <property type="project" value="GO_Central"/>
</dbReference>
<dbReference type="GO" id="GO:0000398">
    <property type="term" value="P:mRNA splicing, via spliceosome"/>
    <property type="evidence" value="ECO:0000250"/>
    <property type="project" value="FlyBase"/>
</dbReference>
<dbReference type="FunFam" id="1.10.150.910:FF:000002">
    <property type="entry name" value="Splicing factor 3B subunit 3"/>
    <property type="match status" value="1"/>
</dbReference>
<dbReference type="FunFam" id="2.130.10.10:FF:000027">
    <property type="entry name" value="Splicing factor 3B subunit 3"/>
    <property type="match status" value="1"/>
</dbReference>
<dbReference type="FunFam" id="2.130.10.10:FF:000041">
    <property type="entry name" value="Splicing factor 3b subunit 3"/>
    <property type="match status" value="1"/>
</dbReference>
<dbReference type="Gene3D" id="2.130.10.10">
    <property type="entry name" value="YVTN repeat-like/Quinoprotein amine dehydrogenase"/>
    <property type="match status" value="3"/>
</dbReference>
<dbReference type="InterPro" id="IPR018846">
    <property type="entry name" value="Beta-prop_RSE1/DDB1/CPSF1_1st"/>
</dbReference>
<dbReference type="InterPro" id="IPR004871">
    <property type="entry name" value="Cleavage/polyA-sp_fac_asu_C"/>
</dbReference>
<dbReference type="InterPro" id="IPR050358">
    <property type="entry name" value="RSE1/DDB1/CFT1/CPSF1"/>
</dbReference>
<dbReference type="InterPro" id="IPR015943">
    <property type="entry name" value="WD40/YVTN_repeat-like_dom_sf"/>
</dbReference>
<dbReference type="InterPro" id="IPR036322">
    <property type="entry name" value="WD40_repeat_dom_sf"/>
</dbReference>
<dbReference type="PANTHER" id="PTHR10644">
    <property type="entry name" value="DNA REPAIR/RNA PROCESSING CPSF FAMILY"/>
    <property type="match status" value="1"/>
</dbReference>
<dbReference type="Pfam" id="PF10433">
    <property type="entry name" value="Beta-prop_RSE1_1st"/>
    <property type="match status" value="1"/>
</dbReference>
<dbReference type="Pfam" id="PF23726">
    <property type="entry name" value="Beta-prop_RSE1_2nd"/>
    <property type="match status" value="1"/>
</dbReference>
<dbReference type="Pfam" id="PF03178">
    <property type="entry name" value="CPSF_A"/>
    <property type="match status" value="1"/>
</dbReference>
<dbReference type="SUPFAM" id="SSF50978">
    <property type="entry name" value="WD40 repeat-like"/>
    <property type="match status" value="1"/>
</dbReference>
<accession>Q9W0M7</accession>
<accession>M9PDJ8</accession>
<accession>Q5BI86</accession>
<protein>
    <recommendedName>
        <fullName evidence="9">Splicing factor 3B subunit 3</fullName>
    </recommendedName>
</protein>
<proteinExistence type="evidence at protein level"/>
<name>SF3B3_DROME</name>
<comment type="function">
    <text evidence="1 5">Involved in pre-mRNA splicing as a component of the splicing factor SF3B complex, a constituent of the spliceosome (PubMed:18981222). SF3B complex is required for 'A' complex assembly formed by the stable binding of U2 snRNP to the branchpoint sequence (BPS) in pre-mRNA (PubMed:18981222). Sequence independent binding of SF3A/SF3B complex upstream of the branch site is essential, it may anchor U2 snRNP to the pre-mRNA (By similarity). May also be involved in the assembly of the 'E' complex (By similarity). Also belongs to the minor U12-dependent spliceosome, which is involved in the splicing of rare class of nuclear pre-mRNA intron (By similarity).</text>
</comment>
<comment type="subunit">
    <text evidence="1 2 3">Identified in the spliceosome A complex; remains associated with the spliceosome throughout the splicing process (By similarity). Component of the spliceosome B complex (By similarity). Identified in the spliceosome C complex (By similarity). Identified in the spliceosome E complex (By similarity). Component of the U11/U12 snRNPs that are part of the U12-type spliceosome (By similarity). Component of splicing factor SF3B complex (PubMed:18981222). Identified in the SAGA transcription regulatory histone acetylation (HAT) complex; the interaction is RNA-independent (PubMed:27185460).</text>
</comment>
<comment type="subcellular location">
    <subcellularLocation>
        <location evidence="2 3">Nucleus</location>
    </subcellularLocation>
</comment>
<comment type="alternative products">
    <event type="alternative splicing"/>
    <isoform>
        <id>Q9W0M7-1</id>
        <name evidence="9">A</name>
        <sequence type="displayed"/>
    </isoform>
    <isoform>
        <id>Q9W0M7-2</id>
        <name evidence="9">C</name>
        <sequence type="described" ref="VSP_059607 VSP_059608"/>
    </isoform>
</comment>
<comment type="similarity">
    <text evidence="4">Belongs to the RSE1 family.</text>
</comment>
<feature type="chain" id="PRO_0000444532" description="Splicing factor 3B subunit 3">
    <location>
        <begin position="1"/>
        <end position="1227"/>
    </location>
</feature>
<feature type="splice variant" id="VSP_059607" description="In isoform C." evidence="4">
    <original>DE</original>
    <variation>GA</variation>
    <location>
        <begin position="468"/>
        <end position="469"/>
    </location>
</feature>
<feature type="splice variant" id="VSP_059608" description="In isoform C." evidence="4">
    <location>
        <begin position="470"/>
        <end position="1227"/>
    </location>
</feature>
<feature type="sequence conflict" description="In Ref. 3; AAX33486." evidence="4" ref="3">
    <original>F</original>
    <variation>L</variation>
    <location>
        <position position="182"/>
    </location>
</feature>
<sequence>MYLYNLTLQKATGVTHAVHGNFSGGKQQEVLLSRGKSLELLRPDSNTGKVHTLLSTEIFGCVRALMAFRLTGGTKDYIVVGSDSGRIVILEYNPSKNALEKVHQETFGKSGCRRIVPGQYFAIDPKGRAVMIGAVEKQKLAYIMNRDTQARLTISSPLEAHKSNTLTYHMVGVDVGFDNPMFACLEIDYEEADMDPSGDAAQRTQQTLTFYELDLGLNHVVRKYSEPLEEHANFLVSVPGGNDGPSGVLICSENYLTYKNLGDQHDIRCPIPRRRNDLDDPERGMIFICSATHRTKSMYFFLLQTEQGDIFKITLETDDDVVSEIKLKYFDTVPPATAMCVLKTGFLFVASEFGNHYLYQIAHLGDDDDEPEFSSAMPLEEGETFFFAPRALKNLVLVDELPSFAPIITSQVADLANEDTPQLYVLCGRGPRSTLRVLRHGLEVSEMAVSELPGNPNAVWTVKKRADDEFDAYIIVSFVNATLVLSIGETVEEVTDSGFLGTTPTLCCAALGDDALVQVYPDGIRHIRSDKRVNEWKAPGKKSITKCAVNQRQVVITLSGRELVYFEMDPTGELNEYTERSEMPAEIMCMALGTVPEGEQRSWFLAVGLADNTVRILSLDPNNCLTPCSMQALPSPAESLCLVEMGHTESTTQGGLDDDAPAQRSGNNKGTIYLNIGLSNGVLLRTVLDPVSGDLADTRTRYLGSRPVKLFRIKMQGSEAVLAMSSRTWLSYYHQNRFHLTPLSYETLEYASGFSSEQCSEGIVAISTNTLRILALEKLGAVFNQVAFPLQYTPRTFVIHPDTGRMLIAETDHNAYTEDTKSARKEQMAEEMRSAAGDEERELAREMANAFINEVLPEDVFSSPKAGLGLWASQIRCLDAMHGQTMFSVPLTQNEAIMSMAMLKFSIAADGRYYLAVGIAKDLQLNPRISQGGCIDIYKIDPTCSSLEFMHRTDIDEIPGALCGFQGRLLAGCGRMLRIYDFGKKKMLRKCENKHIPYQIVNIQAMGHRVYVSDVQESVFFIRYRRAENQLIIFADDTHPRWVTATTLLDYDTIAIADKFGNLSIQRLPHSVTDDVDEDPTGTKSLWDRGLLSGASQKSENICSFHVGEIIMSLQKATLIPGGSEALIYATLSGTVGAFVPFTSREDYDFFQHLEMHMRNENPPLCGRDHLSYRSSYYPVKNVLDGDLCEQYLSIEAAKQKSIAGDMFRTPNQICKKLEDIRTRYAF</sequence>
<keyword id="KW-0025">Alternative splicing</keyword>
<keyword id="KW-0507">mRNA processing</keyword>
<keyword id="KW-0508">mRNA splicing</keyword>
<keyword id="KW-0539">Nucleus</keyword>
<keyword id="KW-1185">Reference proteome</keyword>
<keyword id="KW-0747">Spliceosome</keyword>
<reference evidence="10" key="1">
    <citation type="journal article" date="2000" name="Science">
        <title>The genome sequence of Drosophila melanogaster.</title>
        <authorList>
            <person name="Adams M.D."/>
            <person name="Celniker S.E."/>
            <person name="Holt R.A."/>
            <person name="Evans C.A."/>
            <person name="Gocayne J.D."/>
            <person name="Amanatides P.G."/>
            <person name="Scherer S.E."/>
            <person name="Li P.W."/>
            <person name="Hoskins R.A."/>
            <person name="Galle R.F."/>
            <person name="George R.A."/>
            <person name="Lewis S.E."/>
            <person name="Richards S."/>
            <person name="Ashburner M."/>
            <person name="Henderson S.N."/>
            <person name="Sutton G.G."/>
            <person name="Wortman J.R."/>
            <person name="Yandell M.D."/>
            <person name="Zhang Q."/>
            <person name="Chen L.X."/>
            <person name="Brandon R.C."/>
            <person name="Rogers Y.-H.C."/>
            <person name="Blazej R.G."/>
            <person name="Champe M."/>
            <person name="Pfeiffer B.D."/>
            <person name="Wan K.H."/>
            <person name="Doyle C."/>
            <person name="Baxter E.G."/>
            <person name="Helt G."/>
            <person name="Nelson C.R."/>
            <person name="Miklos G.L.G."/>
            <person name="Abril J.F."/>
            <person name="Agbayani A."/>
            <person name="An H.-J."/>
            <person name="Andrews-Pfannkoch C."/>
            <person name="Baldwin D."/>
            <person name="Ballew R.M."/>
            <person name="Basu A."/>
            <person name="Baxendale J."/>
            <person name="Bayraktaroglu L."/>
            <person name="Beasley E.M."/>
            <person name="Beeson K.Y."/>
            <person name="Benos P.V."/>
            <person name="Berman B.P."/>
            <person name="Bhandari D."/>
            <person name="Bolshakov S."/>
            <person name="Borkova D."/>
            <person name="Botchan M.R."/>
            <person name="Bouck J."/>
            <person name="Brokstein P."/>
            <person name="Brottier P."/>
            <person name="Burtis K.C."/>
            <person name="Busam D.A."/>
            <person name="Butler H."/>
            <person name="Cadieu E."/>
            <person name="Center A."/>
            <person name="Chandra I."/>
            <person name="Cherry J.M."/>
            <person name="Cawley S."/>
            <person name="Dahlke C."/>
            <person name="Davenport L.B."/>
            <person name="Davies P."/>
            <person name="de Pablos B."/>
            <person name="Delcher A."/>
            <person name="Deng Z."/>
            <person name="Mays A.D."/>
            <person name="Dew I."/>
            <person name="Dietz S.M."/>
            <person name="Dodson K."/>
            <person name="Doup L.E."/>
            <person name="Downes M."/>
            <person name="Dugan-Rocha S."/>
            <person name="Dunkov B.C."/>
            <person name="Dunn P."/>
            <person name="Durbin K.J."/>
            <person name="Evangelista C.C."/>
            <person name="Ferraz C."/>
            <person name="Ferriera S."/>
            <person name="Fleischmann W."/>
            <person name="Fosler C."/>
            <person name="Gabrielian A.E."/>
            <person name="Garg N.S."/>
            <person name="Gelbart W.M."/>
            <person name="Glasser K."/>
            <person name="Glodek A."/>
            <person name="Gong F."/>
            <person name="Gorrell J.H."/>
            <person name="Gu Z."/>
            <person name="Guan P."/>
            <person name="Harris M."/>
            <person name="Harris N.L."/>
            <person name="Harvey D.A."/>
            <person name="Heiman T.J."/>
            <person name="Hernandez J.R."/>
            <person name="Houck J."/>
            <person name="Hostin D."/>
            <person name="Houston K.A."/>
            <person name="Howland T.J."/>
            <person name="Wei M.-H."/>
            <person name="Ibegwam C."/>
            <person name="Jalali M."/>
            <person name="Kalush F."/>
            <person name="Karpen G.H."/>
            <person name="Ke Z."/>
            <person name="Kennison J.A."/>
            <person name="Ketchum K.A."/>
            <person name="Kimmel B.E."/>
            <person name="Kodira C.D."/>
            <person name="Kraft C.L."/>
            <person name="Kravitz S."/>
            <person name="Kulp D."/>
            <person name="Lai Z."/>
            <person name="Lasko P."/>
            <person name="Lei Y."/>
            <person name="Levitsky A.A."/>
            <person name="Li J.H."/>
            <person name="Li Z."/>
            <person name="Liang Y."/>
            <person name="Lin X."/>
            <person name="Liu X."/>
            <person name="Mattei B."/>
            <person name="McIntosh T.C."/>
            <person name="McLeod M.P."/>
            <person name="McPherson D."/>
            <person name="Merkulov G."/>
            <person name="Milshina N.V."/>
            <person name="Mobarry C."/>
            <person name="Morris J."/>
            <person name="Moshrefi A."/>
            <person name="Mount S.M."/>
            <person name="Moy M."/>
            <person name="Murphy B."/>
            <person name="Murphy L."/>
            <person name="Muzny D.M."/>
            <person name="Nelson D.L."/>
            <person name="Nelson D.R."/>
            <person name="Nelson K.A."/>
            <person name="Nixon K."/>
            <person name="Nusskern D.R."/>
            <person name="Pacleb J.M."/>
            <person name="Palazzolo M."/>
            <person name="Pittman G.S."/>
            <person name="Pan S."/>
            <person name="Pollard J."/>
            <person name="Puri V."/>
            <person name="Reese M.G."/>
            <person name="Reinert K."/>
            <person name="Remington K."/>
            <person name="Saunders R.D.C."/>
            <person name="Scheeler F."/>
            <person name="Shen H."/>
            <person name="Shue B.C."/>
            <person name="Siden-Kiamos I."/>
            <person name="Simpson M."/>
            <person name="Skupski M.P."/>
            <person name="Smith T.J."/>
            <person name="Spier E."/>
            <person name="Spradling A.C."/>
            <person name="Stapleton M."/>
            <person name="Strong R."/>
            <person name="Sun E."/>
            <person name="Svirskas R."/>
            <person name="Tector C."/>
            <person name="Turner R."/>
            <person name="Venter E."/>
            <person name="Wang A.H."/>
            <person name="Wang X."/>
            <person name="Wang Z.-Y."/>
            <person name="Wassarman D.A."/>
            <person name="Weinstock G.M."/>
            <person name="Weissenbach J."/>
            <person name="Williams S.M."/>
            <person name="Woodage T."/>
            <person name="Worley K.C."/>
            <person name="Wu D."/>
            <person name="Yang S."/>
            <person name="Yao Q.A."/>
            <person name="Ye J."/>
            <person name="Yeh R.-F."/>
            <person name="Zaveri J.S."/>
            <person name="Zhan M."/>
            <person name="Zhang G."/>
            <person name="Zhao Q."/>
            <person name="Zheng L."/>
            <person name="Zheng X.H."/>
            <person name="Zhong F.N."/>
            <person name="Zhong W."/>
            <person name="Zhou X."/>
            <person name="Zhu S.C."/>
            <person name="Zhu X."/>
            <person name="Smith H.O."/>
            <person name="Gibbs R.A."/>
            <person name="Myers E.W."/>
            <person name="Rubin G.M."/>
            <person name="Venter J.C."/>
        </authorList>
    </citation>
    <scope>NUCLEOTIDE SEQUENCE [LARGE SCALE GENOMIC DNA]</scope>
    <source>
        <strain evidence="10">Berkeley</strain>
    </source>
</reference>
<reference evidence="10" key="2">
    <citation type="journal article" date="2002" name="Genome Biol.">
        <title>Annotation of the Drosophila melanogaster euchromatic genome: a systematic review.</title>
        <authorList>
            <person name="Misra S."/>
            <person name="Crosby M.A."/>
            <person name="Mungall C.J."/>
            <person name="Matthews B.B."/>
            <person name="Campbell K.S."/>
            <person name="Hradecky P."/>
            <person name="Huang Y."/>
            <person name="Kaminker J.S."/>
            <person name="Millburn G.H."/>
            <person name="Prochnik S.E."/>
            <person name="Smith C.D."/>
            <person name="Tupy J.L."/>
            <person name="Whitfield E.J."/>
            <person name="Bayraktaroglu L."/>
            <person name="Berman B.P."/>
            <person name="Bettencourt B.R."/>
            <person name="Celniker S.E."/>
            <person name="de Grey A.D.N.J."/>
            <person name="Drysdale R.A."/>
            <person name="Harris N.L."/>
            <person name="Richter J."/>
            <person name="Russo S."/>
            <person name="Schroeder A.J."/>
            <person name="Shu S.Q."/>
            <person name="Stapleton M."/>
            <person name="Yamada C."/>
            <person name="Ashburner M."/>
            <person name="Gelbart W.M."/>
            <person name="Rubin G.M."/>
            <person name="Lewis S.E."/>
        </authorList>
    </citation>
    <scope>GENOME REANNOTATION</scope>
    <source>
        <strain evidence="10">Berkeley</strain>
    </source>
</reference>
<reference evidence="8" key="3">
    <citation type="submission" date="2010-03" db="EMBL/GenBank/DDBJ databases">
        <authorList>
            <person name="Carlson J."/>
            <person name="Booth B."/>
            <person name="Chavez C."/>
            <person name="Frise E."/>
            <person name="George R."/>
            <person name="Pacleb J."/>
            <person name="Park S."/>
            <person name="Rubin G.M."/>
            <person name="Stapleton M."/>
            <person name="Wan K."/>
            <person name="Yu C."/>
            <person name="Celniker S."/>
        </authorList>
    </citation>
    <scope>NUCLEOTIDE SEQUENCE [LARGE SCALE MRNA] (ISOFORM A)</scope>
    <source>
        <strain evidence="6 7 8">Berkeley</strain>
        <tissue evidence="6 7">Embryo</tissue>
    </source>
</reference>
<reference evidence="4" key="4">
    <citation type="journal article" date="2009" name="Mol. Cell. Biol.">
        <title>Conservation of the protein composition and electron microscopy structure of Drosophila melanogaster and human spliceosomal complexes.</title>
        <authorList>
            <person name="Herold N."/>
            <person name="Will C.L."/>
            <person name="Wolf E."/>
            <person name="Kastner B."/>
            <person name="Urlaub H."/>
            <person name="Luhrmann R."/>
        </authorList>
    </citation>
    <scope>IDENTIFICATION BY MASS SPECTROMETRY</scope>
    <scope>FUNCTION</scope>
    <scope>IDENTIFICATION IN THE SF3B COMPLEX</scope>
    <scope>SUBCELLULAR LOCATION</scope>
</reference>
<reference evidence="4" key="5">
    <citation type="journal article" date="2016" name="J. Mol. Biol.">
        <title>The Spliceosomal Protein SF3B5 is a Novel Component of Drosophila SAGA that Functions in Gene Expression Independent of Splicing.</title>
        <authorList>
            <person name="Stegeman R."/>
            <person name="Spreacker P.J."/>
            <person name="Swanson S.K."/>
            <person name="Stephenson R."/>
            <person name="Florens L."/>
            <person name="Washburn M.P."/>
            <person name="Weake V.M."/>
        </authorList>
    </citation>
    <scope>IDENTIFICATION BY MASS SPECTROMETRY</scope>
    <scope>IDENTIFICATION IN THE SAGA COMPLEX</scope>
    <scope>SUBCELLULAR LOCATION</scope>
</reference>
<evidence type="ECO:0000250" key="1">
    <source>
        <dbReference type="UniProtKB" id="Q15393"/>
    </source>
</evidence>
<evidence type="ECO:0000269" key="2">
    <source>
    </source>
</evidence>
<evidence type="ECO:0000269" key="3">
    <source>
    </source>
</evidence>
<evidence type="ECO:0000305" key="4"/>
<evidence type="ECO:0000305" key="5">
    <source>
    </source>
</evidence>
<evidence type="ECO:0000312" key="6">
    <source>
        <dbReference type="EMBL" id="AAX33486.1"/>
    </source>
</evidence>
<evidence type="ECO:0000312" key="7">
    <source>
        <dbReference type="EMBL" id="AAX33572.1"/>
    </source>
</evidence>
<evidence type="ECO:0000312" key="8">
    <source>
        <dbReference type="EMBL" id="ADD20765.1"/>
    </source>
</evidence>
<evidence type="ECO:0000312" key="9">
    <source>
        <dbReference type="FlyBase" id="FBgn0035162"/>
    </source>
</evidence>
<evidence type="ECO:0000312" key="10">
    <source>
        <dbReference type="Proteomes" id="UP000000803"/>
    </source>
</evidence>